<accession>Q8EB93</accession>
<dbReference type="EC" id="2.1.1.182" evidence="1"/>
<dbReference type="EMBL" id="AE014299">
    <property type="protein sequence ID" value="AAN56625.1"/>
    <property type="molecule type" value="Genomic_DNA"/>
</dbReference>
<dbReference type="RefSeq" id="NP_719181.1">
    <property type="nucleotide sequence ID" value="NC_004347.2"/>
</dbReference>
<dbReference type="RefSeq" id="WP_011073442.1">
    <property type="nucleotide sequence ID" value="NC_004347.2"/>
</dbReference>
<dbReference type="SMR" id="Q8EB93"/>
<dbReference type="STRING" id="211586.SO_3639"/>
<dbReference type="PaxDb" id="211586-SO_3639"/>
<dbReference type="KEGG" id="son:SO_3639"/>
<dbReference type="PATRIC" id="fig|211586.12.peg.3528"/>
<dbReference type="eggNOG" id="COG0030">
    <property type="taxonomic scope" value="Bacteria"/>
</dbReference>
<dbReference type="HOGENOM" id="CLU_041220_0_1_6"/>
<dbReference type="OrthoDB" id="9814755at2"/>
<dbReference type="PhylomeDB" id="Q8EB93"/>
<dbReference type="BioCyc" id="SONE211586:G1GMP-3390-MONOMER"/>
<dbReference type="Proteomes" id="UP000008186">
    <property type="component" value="Chromosome"/>
</dbReference>
<dbReference type="GO" id="GO:0005829">
    <property type="term" value="C:cytosol"/>
    <property type="evidence" value="ECO:0000318"/>
    <property type="project" value="GO_Central"/>
</dbReference>
<dbReference type="GO" id="GO:0052908">
    <property type="term" value="F:16S rRNA (adenine(1518)-N(6)/adenine(1519)-N(6))-dimethyltransferase activity"/>
    <property type="evidence" value="ECO:0007669"/>
    <property type="project" value="UniProtKB-EC"/>
</dbReference>
<dbReference type="GO" id="GO:0003723">
    <property type="term" value="F:RNA binding"/>
    <property type="evidence" value="ECO:0007669"/>
    <property type="project" value="UniProtKB-KW"/>
</dbReference>
<dbReference type="GO" id="GO:0000179">
    <property type="term" value="F:rRNA (adenine-N6,N6-)-dimethyltransferase activity"/>
    <property type="evidence" value="ECO:0000318"/>
    <property type="project" value="GO_Central"/>
</dbReference>
<dbReference type="GO" id="GO:0031167">
    <property type="term" value="P:rRNA methylation"/>
    <property type="evidence" value="ECO:0000318"/>
    <property type="project" value="GO_Central"/>
</dbReference>
<dbReference type="FunFam" id="1.10.8.100:FF:000001">
    <property type="entry name" value="Ribosomal RNA small subunit methyltransferase A"/>
    <property type="match status" value="1"/>
</dbReference>
<dbReference type="FunFam" id="3.40.50.150:FF:000006">
    <property type="entry name" value="Ribosomal RNA small subunit methyltransferase A"/>
    <property type="match status" value="1"/>
</dbReference>
<dbReference type="Gene3D" id="1.10.8.100">
    <property type="entry name" value="Ribosomal RNA adenine dimethylase-like, domain 2"/>
    <property type="match status" value="1"/>
</dbReference>
<dbReference type="Gene3D" id="3.40.50.150">
    <property type="entry name" value="Vaccinia Virus protein VP39"/>
    <property type="match status" value="1"/>
</dbReference>
<dbReference type="HAMAP" id="MF_00607">
    <property type="entry name" value="16SrRNA_methyltr_A"/>
    <property type="match status" value="1"/>
</dbReference>
<dbReference type="InterPro" id="IPR001737">
    <property type="entry name" value="KsgA/Erm"/>
</dbReference>
<dbReference type="InterPro" id="IPR023165">
    <property type="entry name" value="rRNA_Ade_diMease-like_C"/>
</dbReference>
<dbReference type="InterPro" id="IPR020596">
    <property type="entry name" value="rRNA_Ade_Mease_Trfase_CS"/>
</dbReference>
<dbReference type="InterPro" id="IPR020598">
    <property type="entry name" value="rRNA_Ade_methylase_Trfase_N"/>
</dbReference>
<dbReference type="InterPro" id="IPR011530">
    <property type="entry name" value="rRNA_adenine_dimethylase"/>
</dbReference>
<dbReference type="InterPro" id="IPR029063">
    <property type="entry name" value="SAM-dependent_MTases_sf"/>
</dbReference>
<dbReference type="NCBIfam" id="TIGR00755">
    <property type="entry name" value="ksgA"/>
    <property type="match status" value="1"/>
</dbReference>
<dbReference type="PANTHER" id="PTHR11727">
    <property type="entry name" value="DIMETHYLADENOSINE TRANSFERASE"/>
    <property type="match status" value="1"/>
</dbReference>
<dbReference type="PANTHER" id="PTHR11727:SF7">
    <property type="entry name" value="DIMETHYLADENOSINE TRANSFERASE-RELATED"/>
    <property type="match status" value="1"/>
</dbReference>
<dbReference type="Pfam" id="PF00398">
    <property type="entry name" value="RrnaAD"/>
    <property type="match status" value="1"/>
</dbReference>
<dbReference type="SMART" id="SM00650">
    <property type="entry name" value="rADc"/>
    <property type="match status" value="1"/>
</dbReference>
<dbReference type="SUPFAM" id="SSF53335">
    <property type="entry name" value="S-adenosyl-L-methionine-dependent methyltransferases"/>
    <property type="match status" value="1"/>
</dbReference>
<dbReference type="PROSITE" id="PS01131">
    <property type="entry name" value="RRNA_A_DIMETH"/>
    <property type="match status" value="1"/>
</dbReference>
<dbReference type="PROSITE" id="PS51689">
    <property type="entry name" value="SAM_RNA_A_N6_MT"/>
    <property type="match status" value="1"/>
</dbReference>
<gene>
    <name evidence="1" type="primary">rsmA</name>
    <name evidence="1" type="synonym">ksgA</name>
    <name type="ordered locus">SO_3639</name>
</gene>
<name>RSMA_SHEON</name>
<organism>
    <name type="scientific">Shewanella oneidensis (strain ATCC 700550 / JCM 31522 / CIP 106686 / LMG 19005 / NCIMB 14063 / MR-1)</name>
    <dbReference type="NCBI Taxonomy" id="211586"/>
    <lineage>
        <taxon>Bacteria</taxon>
        <taxon>Pseudomonadati</taxon>
        <taxon>Pseudomonadota</taxon>
        <taxon>Gammaproteobacteria</taxon>
        <taxon>Alteromonadales</taxon>
        <taxon>Shewanellaceae</taxon>
        <taxon>Shewanella</taxon>
    </lineage>
</organism>
<protein>
    <recommendedName>
        <fullName evidence="1">Ribosomal RNA small subunit methyltransferase A</fullName>
        <ecNumber evidence="1">2.1.1.182</ecNumber>
    </recommendedName>
    <alternativeName>
        <fullName evidence="1">16S rRNA (adenine(1518)-N(6)/adenine(1519)-N(6))-dimethyltransferase</fullName>
    </alternativeName>
    <alternativeName>
        <fullName evidence="1">16S rRNA dimethyladenosine transferase</fullName>
    </alternativeName>
    <alternativeName>
        <fullName evidence="1">16S rRNA dimethylase</fullName>
    </alternativeName>
    <alternativeName>
        <fullName evidence="1">S-adenosylmethionine-6-N', N'-adenosyl(rRNA) dimethyltransferase</fullName>
    </alternativeName>
</protein>
<comment type="function">
    <text evidence="1">Specifically dimethylates two adjacent adenosines (A1518 and A1519) in the loop of a conserved hairpin near the 3'-end of 16S rRNA in the 30S particle. May play a critical role in biogenesis of 30S subunits.</text>
</comment>
<comment type="catalytic activity">
    <reaction evidence="1">
        <text>adenosine(1518)/adenosine(1519) in 16S rRNA + 4 S-adenosyl-L-methionine = N(6)-dimethyladenosine(1518)/N(6)-dimethyladenosine(1519) in 16S rRNA + 4 S-adenosyl-L-homocysteine + 4 H(+)</text>
        <dbReference type="Rhea" id="RHEA:19609"/>
        <dbReference type="Rhea" id="RHEA-COMP:10232"/>
        <dbReference type="Rhea" id="RHEA-COMP:10233"/>
        <dbReference type="ChEBI" id="CHEBI:15378"/>
        <dbReference type="ChEBI" id="CHEBI:57856"/>
        <dbReference type="ChEBI" id="CHEBI:59789"/>
        <dbReference type="ChEBI" id="CHEBI:74411"/>
        <dbReference type="ChEBI" id="CHEBI:74493"/>
        <dbReference type="EC" id="2.1.1.182"/>
    </reaction>
</comment>
<comment type="subcellular location">
    <subcellularLocation>
        <location evidence="1">Cytoplasm</location>
    </subcellularLocation>
</comment>
<comment type="similarity">
    <text evidence="1">Belongs to the class I-like SAM-binding methyltransferase superfamily. rRNA adenine N(6)-methyltransferase family. RsmA subfamily.</text>
</comment>
<feature type="chain" id="PRO_0000101600" description="Ribosomal RNA small subunit methyltransferase A">
    <location>
        <begin position="1"/>
        <end position="268"/>
    </location>
</feature>
<feature type="binding site" evidence="1">
    <location>
        <position position="18"/>
    </location>
    <ligand>
        <name>S-adenosyl-L-methionine</name>
        <dbReference type="ChEBI" id="CHEBI:59789"/>
    </ligand>
</feature>
<feature type="binding site" evidence="1">
    <location>
        <position position="20"/>
    </location>
    <ligand>
        <name>S-adenosyl-L-methionine</name>
        <dbReference type="ChEBI" id="CHEBI:59789"/>
    </ligand>
</feature>
<feature type="binding site" evidence="1">
    <location>
        <position position="45"/>
    </location>
    <ligand>
        <name>S-adenosyl-L-methionine</name>
        <dbReference type="ChEBI" id="CHEBI:59789"/>
    </ligand>
</feature>
<feature type="binding site" evidence="1">
    <location>
        <position position="66"/>
    </location>
    <ligand>
        <name>S-adenosyl-L-methionine</name>
        <dbReference type="ChEBI" id="CHEBI:59789"/>
    </ligand>
</feature>
<feature type="binding site" evidence="1">
    <location>
        <position position="91"/>
    </location>
    <ligand>
        <name>S-adenosyl-L-methionine</name>
        <dbReference type="ChEBI" id="CHEBI:59789"/>
    </ligand>
</feature>
<feature type="binding site" evidence="1">
    <location>
        <position position="112"/>
    </location>
    <ligand>
        <name>S-adenosyl-L-methionine</name>
        <dbReference type="ChEBI" id="CHEBI:59789"/>
    </ligand>
</feature>
<sequence length="268" mass="30147">MSSKVHLGHTARKRFGQNFLTDDNVINRIVGAIAPDNDHVMVEIGPGLGALTEPVATAIDNLTVVELDRDLVERLQNHPVLKDKLTIHQGDALQFDFSQLVVPGKKLKVFGNLPYNISTPLMFHLFEFAEQIETMHFMLQKEVVLRLSASPGTKAYGRLTVMAQYFCQVVPVLEVPPHSFAPPPKVDSAVVRLLPYAEKPFPCKDVNVLRQLCTTAFNMRRKTLRNNLKQVLSDEEFEQLGIDQNLRPEQISVEQYVAMANMVCDKQA</sequence>
<reference key="1">
    <citation type="journal article" date="2002" name="Nat. Biotechnol.">
        <title>Genome sequence of the dissimilatory metal ion-reducing bacterium Shewanella oneidensis.</title>
        <authorList>
            <person name="Heidelberg J.F."/>
            <person name="Paulsen I.T."/>
            <person name="Nelson K.E."/>
            <person name="Gaidos E.J."/>
            <person name="Nelson W.C."/>
            <person name="Read T.D."/>
            <person name="Eisen J.A."/>
            <person name="Seshadri R."/>
            <person name="Ward N.L."/>
            <person name="Methe B.A."/>
            <person name="Clayton R.A."/>
            <person name="Meyer T."/>
            <person name="Tsapin A."/>
            <person name="Scott J."/>
            <person name="Beanan M.J."/>
            <person name="Brinkac L.M."/>
            <person name="Daugherty S.C."/>
            <person name="DeBoy R.T."/>
            <person name="Dodson R.J."/>
            <person name="Durkin A.S."/>
            <person name="Haft D.H."/>
            <person name="Kolonay J.F."/>
            <person name="Madupu R."/>
            <person name="Peterson J.D."/>
            <person name="Umayam L.A."/>
            <person name="White O."/>
            <person name="Wolf A.M."/>
            <person name="Vamathevan J.J."/>
            <person name="Weidman J.F."/>
            <person name="Impraim M."/>
            <person name="Lee K."/>
            <person name="Berry K.J."/>
            <person name="Lee C."/>
            <person name="Mueller J."/>
            <person name="Khouri H.M."/>
            <person name="Gill J."/>
            <person name="Utterback T.R."/>
            <person name="McDonald L.A."/>
            <person name="Feldblyum T.V."/>
            <person name="Smith H.O."/>
            <person name="Venter J.C."/>
            <person name="Nealson K.H."/>
            <person name="Fraser C.M."/>
        </authorList>
    </citation>
    <scope>NUCLEOTIDE SEQUENCE [LARGE SCALE GENOMIC DNA]</scope>
    <source>
        <strain>ATCC 700550 / JCM 31522 / CIP 106686 / LMG 19005 / NCIMB 14063 / MR-1</strain>
    </source>
</reference>
<proteinExistence type="inferred from homology"/>
<evidence type="ECO:0000255" key="1">
    <source>
        <dbReference type="HAMAP-Rule" id="MF_00607"/>
    </source>
</evidence>
<keyword id="KW-0963">Cytoplasm</keyword>
<keyword id="KW-0489">Methyltransferase</keyword>
<keyword id="KW-1185">Reference proteome</keyword>
<keyword id="KW-0694">RNA-binding</keyword>
<keyword id="KW-0698">rRNA processing</keyword>
<keyword id="KW-0949">S-adenosyl-L-methionine</keyword>
<keyword id="KW-0808">Transferase</keyword>